<feature type="signal peptide" evidence="2">
    <location>
        <begin position="1"/>
        <end position="22"/>
    </location>
</feature>
<feature type="chain" id="PRO_0000045333" description="Beta-defensin 109B">
    <location>
        <begin position="23"/>
        <end position="87"/>
    </location>
</feature>
<feature type="disulfide bond" evidence="1">
    <location>
        <begin position="31"/>
        <end position="59"/>
    </location>
</feature>
<feature type="disulfide bond" evidence="1">
    <location>
        <begin position="38"/>
        <end position="53"/>
    </location>
</feature>
<feature type="disulfide bond" evidence="1">
    <location>
        <begin position="43"/>
        <end position="60"/>
    </location>
</feature>
<accession>Q30KR1</accession>
<reference key="1">
    <citation type="journal article" date="2005" name="Physiol. Genomics">
        <title>Cross-species analysis of the mammalian beta-defensin gene family: presence of syntenic gene clusters and preferential expression in the male reproductive tract.</title>
        <authorList>
            <person name="Patil A.A."/>
            <person name="Cai Y."/>
            <person name="Sang Y."/>
            <person name="Blecha F."/>
            <person name="Zhang G."/>
        </authorList>
    </citation>
    <scope>NUCLEOTIDE SEQUENCE [MRNA]</scope>
</reference>
<reference key="2">
    <citation type="journal article" date="2008" name="Invest. Ophthalmol. Vis. Sci.">
        <title>A novel antimicrobial peptide on the ocular surface shows decreased expression in inflammation and infection.</title>
        <authorList>
            <person name="Abedin A."/>
            <person name="Mohammed I."/>
            <person name="Hopkinson A."/>
            <person name="Dua H.S."/>
        </authorList>
    </citation>
    <scope>INDUCTION</scope>
</reference>
<reference key="3">
    <citation type="journal article" date="2010" name="Invest. Ophthalmol. Vis. Sci.">
        <title>Localization and gene expression of human beta-defensin 9 at the human ocular surface epithelium.</title>
        <authorList>
            <person name="Mohammed I."/>
            <person name="Suleman H."/>
            <person name="Otri A.M."/>
            <person name="Kulkarni B.B."/>
            <person name="Chen P."/>
            <person name="Hopkinson A."/>
            <person name="Dua H.S."/>
        </authorList>
    </citation>
    <scope>TISSUE SPECIFICITY</scope>
    <scope>INDUCTION</scope>
</reference>
<keyword id="KW-0044">Antibiotic</keyword>
<keyword id="KW-0929">Antimicrobial</keyword>
<keyword id="KW-0211">Defensin</keyword>
<keyword id="KW-1015">Disulfide bond</keyword>
<keyword id="KW-1185">Reference proteome</keyword>
<keyword id="KW-0964">Secreted</keyword>
<keyword id="KW-0732">Signal</keyword>
<name>DB109_HUMAN</name>
<proteinExistence type="evidence at protein level"/>
<protein>
    <recommendedName>
        <fullName>Beta-defensin 109B</fullName>
        <shortName evidence="5">DEFB-109</shortName>
        <shortName evidence="6">HBD9</shortName>
    </recommendedName>
    <alternativeName>
        <fullName evidence="8">Defensin beta 109B</fullName>
    </alternativeName>
</protein>
<dbReference type="EMBL" id="DQ012013">
    <property type="protein sequence ID" value="AAY59749.1"/>
    <property type="molecule type" value="mRNA"/>
</dbReference>
<dbReference type="RefSeq" id="NP_001032457.1">
    <property type="nucleotide sequence ID" value="NM_001037380.2"/>
</dbReference>
<dbReference type="FunCoup" id="Q30KR1">
    <property type="interactions" value="177"/>
</dbReference>
<dbReference type="IntAct" id="Q30KR1">
    <property type="interactions" value="36"/>
</dbReference>
<dbReference type="BioMuta" id="HGNC:33469"/>
<dbReference type="DMDM" id="84028868"/>
<dbReference type="PeptideAtlas" id="Q30KR1"/>
<dbReference type="Ensembl" id="ENST00000382656.2">
    <property type="protein sequence ID" value="ENSP00000516541.1"/>
    <property type="gene ID" value="ENSG00000206034.2"/>
</dbReference>
<dbReference type="GeneID" id="641517"/>
<dbReference type="MANE-Select" id="ENST00000382656.2">
    <property type="protein sequence ID" value="ENSP00000516541.1"/>
    <property type="RefSeq nucleotide sequence ID" value="NM_001037380.2"/>
    <property type="RefSeq protein sequence ID" value="NP_001032457.1"/>
</dbReference>
<dbReference type="AGR" id="HGNC:33469"/>
<dbReference type="GeneCards" id="DEFB109B"/>
<dbReference type="HGNC" id="HGNC:33469">
    <property type="gene designation" value="DEFB109B"/>
</dbReference>
<dbReference type="HPA" id="ENSG00000206034">
    <property type="expression patterns" value="Tissue enriched (epididymis)"/>
</dbReference>
<dbReference type="neXtProt" id="NX_Q30KR1"/>
<dbReference type="GeneTree" id="ENSGT00940000160995"/>
<dbReference type="InParanoid" id="Q30KR1"/>
<dbReference type="PAN-GO" id="Q30KR1">
    <property type="GO annotations" value="5 GO annotations based on evolutionary models"/>
</dbReference>
<dbReference type="PhylomeDB" id="Q30KR1"/>
<dbReference type="PathwayCommons" id="Q30KR1"/>
<dbReference type="Reactome" id="R-HSA-1461957">
    <property type="pathway name" value="Beta defensins"/>
</dbReference>
<dbReference type="SignaLink" id="Q30KR1"/>
<dbReference type="Pharos" id="Q30KR1">
    <property type="development level" value="Tdark"/>
</dbReference>
<dbReference type="PRO" id="PR:Q30KR1"/>
<dbReference type="Proteomes" id="UP000005640">
    <property type="component" value="Chromosome 8"/>
</dbReference>
<dbReference type="RNAct" id="Q30KR1">
    <property type="molecule type" value="protein"/>
</dbReference>
<dbReference type="GO" id="GO:0005615">
    <property type="term" value="C:extracellular space"/>
    <property type="evidence" value="ECO:0000318"/>
    <property type="project" value="GO_Central"/>
</dbReference>
<dbReference type="GO" id="GO:0031731">
    <property type="term" value="F:CCR6 chemokine receptor binding"/>
    <property type="evidence" value="ECO:0000318"/>
    <property type="project" value="GO_Central"/>
</dbReference>
<dbReference type="GO" id="GO:0042056">
    <property type="term" value="F:chemoattractant activity"/>
    <property type="evidence" value="ECO:0000318"/>
    <property type="project" value="GO_Central"/>
</dbReference>
<dbReference type="GO" id="GO:0060326">
    <property type="term" value="P:cell chemotaxis"/>
    <property type="evidence" value="ECO:0000318"/>
    <property type="project" value="GO_Central"/>
</dbReference>
<dbReference type="GO" id="GO:0042742">
    <property type="term" value="P:defense response to bacterium"/>
    <property type="evidence" value="ECO:0000318"/>
    <property type="project" value="GO_Central"/>
</dbReference>
<dbReference type="PANTHER" id="PTHR20515">
    <property type="entry name" value="BETA-DEFENSIN"/>
    <property type="match status" value="1"/>
</dbReference>
<dbReference type="PANTHER" id="PTHR20515:SF3">
    <property type="entry name" value="BETA-DEFENSIN 109B-RELATED"/>
    <property type="match status" value="1"/>
</dbReference>
<dbReference type="SUPFAM" id="SSF57392">
    <property type="entry name" value="Defensin-like"/>
    <property type="match status" value="1"/>
</dbReference>
<sequence>MRLHLLLLILLLFSILLSPVRGGLGPAEGHCLNLFGVCRTDVCNIVEDQIGACRRRMKCCRAWWILMPIPTPLIMSDYQEPLKPNLK</sequence>
<organism>
    <name type="scientific">Homo sapiens</name>
    <name type="common">Human</name>
    <dbReference type="NCBI Taxonomy" id="9606"/>
    <lineage>
        <taxon>Eukaryota</taxon>
        <taxon>Metazoa</taxon>
        <taxon>Chordata</taxon>
        <taxon>Craniata</taxon>
        <taxon>Vertebrata</taxon>
        <taxon>Euteleostomi</taxon>
        <taxon>Mammalia</taxon>
        <taxon>Eutheria</taxon>
        <taxon>Euarchontoglires</taxon>
        <taxon>Primates</taxon>
        <taxon>Haplorrhini</taxon>
        <taxon>Catarrhini</taxon>
        <taxon>Hominidae</taxon>
        <taxon>Homo</taxon>
    </lineage>
</organism>
<evidence type="ECO:0000250" key="1"/>
<evidence type="ECO:0000255" key="2"/>
<evidence type="ECO:0000269" key="3">
    <source>
    </source>
</evidence>
<evidence type="ECO:0000269" key="4">
    <source>
    </source>
</evidence>
<evidence type="ECO:0000303" key="5">
    <source>
    </source>
</evidence>
<evidence type="ECO:0000303" key="6">
    <source>
    </source>
</evidence>
<evidence type="ECO:0000305" key="7"/>
<evidence type="ECO:0000312" key="8">
    <source>
        <dbReference type="HGNC" id="HGNC:33469"/>
    </source>
</evidence>
<gene>
    <name evidence="8" type="primary">DEFB109B</name>
    <name type="synonym">DEFB109P1B</name>
</gene>
<comment type="function">
    <text evidence="1">Has antibacterial activity.</text>
</comment>
<comment type="subcellular location">
    <subcellularLocation>
        <location evidence="1">Secreted</location>
    </subcellularLocation>
</comment>
<comment type="tissue specificity">
    <text evidence="4">Constitutively expressed in all regions of the ocular surface with predominant expression in the uppermost layers of the corneal epithelium and lower levels in basal layers (at protein level) (PubMed:20375350). Also detected in some keratocytes in the corneal stroma (at protein level) (PubMed:20375350). Expressed in all layers of the limbal epithelium with no expression found in limbal keratocytes (at protein level) (PubMed:20375350). Strongly expressed in the conjunctival epithelium with decreased expression in basal layers (at protein level) (PubMed:20375350). Also strongly expressed in tonsil tissue (at protein level) (PubMed:20375350).</text>
</comment>
<comment type="induction">
    <text evidence="3 4">Down-regulated on the ocular surface following inflammation and bacterial and viral infection.</text>
</comment>
<comment type="similarity">
    <text evidence="7">Belongs to the beta-defensin family.</text>
</comment>